<organism>
    <name type="scientific">Schizosaccharomyces pombe (strain 972 / ATCC 24843)</name>
    <name type="common">Fission yeast</name>
    <dbReference type="NCBI Taxonomy" id="284812"/>
    <lineage>
        <taxon>Eukaryota</taxon>
        <taxon>Fungi</taxon>
        <taxon>Dikarya</taxon>
        <taxon>Ascomycota</taxon>
        <taxon>Taphrinomycotina</taxon>
        <taxon>Schizosaccharomycetes</taxon>
        <taxon>Schizosaccharomycetales</taxon>
        <taxon>Schizosaccharomycetaceae</taxon>
        <taxon>Schizosaccharomyces</taxon>
    </lineage>
</organism>
<name>TRM9_SCHPO</name>
<dbReference type="EC" id="2.1.1.229"/>
<dbReference type="EMBL" id="CU329670">
    <property type="protein sequence ID" value="CAA93543.1"/>
    <property type="molecule type" value="Genomic_DNA"/>
</dbReference>
<dbReference type="PIR" id="T37623">
    <property type="entry name" value="T37623"/>
</dbReference>
<dbReference type="RefSeq" id="NP_593681.1">
    <property type="nucleotide sequence ID" value="NM_001019113.2"/>
</dbReference>
<dbReference type="SMR" id="Q10224"/>
<dbReference type="BioGRID" id="279350">
    <property type="interactions" value="6"/>
</dbReference>
<dbReference type="FunCoup" id="Q10224">
    <property type="interactions" value="479"/>
</dbReference>
<dbReference type="STRING" id="284812.Q10224"/>
<dbReference type="PaxDb" id="4896-SPAC13D6.03c.1"/>
<dbReference type="EnsemblFungi" id="SPAC13D6.03c.1">
    <property type="protein sequence ID" value="SPAC13D6.03c.1:pep"/>
    <property type="gene ID" value="SPAC13D6.03c"/>
</dbReference>
<dbReference type="GeneID" id="2542906"/>
<dbReference type="KEGG" id="spo:2542906"/>
<dbReference type="PomBase" id="SPAC13D6.03c">
    <property type="gene designation" value="trm9"/>
</dbReference>
<dbReference type="VEuPathDB" id="FungiDB:SPAC13D6.03c"/>
<dbReference type="eggNOG" id="KOG1331">
    <property type="taxonomic scope" value="Eukaryota"/>
</dbReference>
<dbReference type="HOGENOM" id="CLU_029501_2_0_1"/>
<dbReference type="InParanoid" id="Q10224"/>
<dbReference type="OMA" id="VHEVYQQ"/>
<dbReference type="PhylomeDB" id="Q10224"/>
<dbReference type="PRO" id="PR:Q10224"/>
<dbReference type="Proteomes" id="UP000002485">
    <property type="component" value="Chromosome I"/>
</dbReference>
<dbReference type="GO" id="GO:0005737">
    <property type="term" value="C:cytoplasm"/>
    <property type="evidence" value="ECO:0000318"/>
    <property type="project" value="GO_Central"/>
</dbReference>
<dbReference type="GO" id="GO:0005829">
    <property type="term" value="C:cytosol"/>
    <property type="evidence" value="ECO:0007005"/>
    <property type="project" value="PomBase"/>
</dbReference>
<dbReference type="GO" id="GO:0005634">
    <property type="term" value="C:nucleus"/>
    <property type="evidence" value="ECO:0007005"/>
    <property type="project" value="PomBase"/>
</dbReference>
<dbReference type="GO" id="GO:0008757">
    <property type="term" value="F:S-adenosylmethionine-dependent methyltransferase activity"/>
    <property type="evidence" value="ECO:0007669"/>
    <property type="project" value="InterPro"/>
</dbReference>
<dbReference type="GO" id="GO:0106335">
    <property type="term" value="F:tRNA (5-carboxymethyluridine(34)-5-O)-methyltransferase activity"/>
    <property type="evidence" value="ECO:0000318"/>
    <property type="project" value="GO_Central"/>
</dbReference>
<dbReference type="GO" id="GO:0000049">
    <property type="term" value="F:tRNA binding"/>
    <property type="evidence" value="ECO:0000318"/>
    <property type="project" value="GO_Central"/>
</dbReference>
<dbReference type="GO" id="GO:0030488">
    <property type="term" value="P:tRNA methylation"/>
    <property type="evidence" value="ECO:0000318"/>
    <property type="project" value="GO_Central"/>
</dbReference>
<dbReference type="GO" id="GO:0002098">
    <property type="term" value="P:tRNA wobble uridine modification"/>
    <property type="evidence" value="ECO:0000318"/>
    <property type="project" value="GO_Central"/>
</dbReference>
<dbReference type="CDD" id="cd02440">
    <property type="entry name" value="AdoMet_MTases"/>
    <property type="match status" value="1"/>
</dbReference>
<dbReference type="Gene3D" id="3.40.50.150">
    <property type="entry name" value="Vaccinia Virus protein VP39"/>
    <property type="match status" value="1"/>
</dbReference>
<dbReference type="InterPro" id="IPR051422">
    <property type="entry name" value="AlkB_tRNA_MeTrf/Diox"/>
</dbReference>
<dbReference type="InterPro" id="IPR013216">
    <property type="entry name" value="Methyltransf_11"/>
</dbReference>
<dbReference type="InterPro" id="IPR029063">
    <property type="entry name" value="SAM-dependent_MTases_sf"/>
</dbReference>
<dbReference type="PANTHER" id="PTHR13069">
    <property type="entry name" value="ALKYLATED DNA REPAIR PROTEIN ALKB HOMOLOG 8"/>
    <property type="match status" value="1"/>
</dbReference>
<dbReference type="PANTHER" id="PTHR13069:SF21">
    <property type="entry name" value="ALKYLATED DNA REPAIR PROTEIN ALKB HOMOLOG 8"/>
    <property type="match status" value="1"/>
</dbReference>
<dbReference type="Pfam" id="PF08241">
    <property type="entry name" value="Methyltransf_11"/>
    <property type="match status" value="1"/>
</dbReference>
<dbReference type="SUPFAM" id="SSF53335">
    <property type="entry name" value="S-adenosyl-L-methionine-dependent methyltransferases"/>
    <property type="match status" value="1"/>
</dbReference>
<gene>
    <name type="primary">trm9</name>
    <name type="ORF">SPAC13D6.03c</name>
</gene>
<keyword id="KW-0963">Cytoplasm</keyword>
<keyword id="KW-0489">Methyltransferase</keyword>
<keyword id="KW-0539">Nucleus</keyword>
<keyword id="KW-1185">Reference proteome</keyword>
<keyword id="KW-0949">S-adenosyl-L-methionine</keyword>
<keyword id="KW-0808">Transferase</keyword>
<sequence length="228" mass="26277">MEIEYENEYVHQVYDKIATHFSDTRYKPWPVVEKFLKSLPLGSVGVDIGCGNGKYQKVNPNVYMIGSDRCVKLVKIASNLGPMVISDGLHVPHPSNRFDFALSIAVIHHFSNENRRLQAVQEVLRPLVKGGKALFFVWALEQKNSRRGFSEDGPQDVYVPWILKRQYEYPNAKPEELKGHDPAENIAYQRYYHLFRKGELNELVETAGGSILEHGYDRDNWWVIAEKN</sequence>
<reference key="1">
    <citation type="journal article" date="2002" name="Nature">
        <title>The genome sequence of Schizosaccharomyces pombe.</title>
        <authorList>
            <person name="Wood V."/>
            <person name="Gwilliam R."/>
            <person name="Rajandream M.A."/>
            <person name="Lyne M.H."/>
            <person name="Lyne R."/>
            <person name="Stewart A."/>
            <person name="Sgouros J.G."/>
            <person name="Peat N."/>
            <person name="Hayles J."/>
            <person name="Baker S.G."/>
            <person name="Basham D."/>
            <person name="Bowman S."/>
            <person name="Brooks K."/>
            <person name="Brown D."/>
            <person name="Brown S."/>
            <person name="Chillingworth T."/>
            <person name="Churcher C.M."/>
            <person name="Collins M."/>
            <person name="Connor R."/>
            <person name="Cronin A."/>
            <person name="Davis P."/>
            <person name="Feltwell T."/>
            <person name="Fraser A."/>
            <person name="Gentles S."/>
            <person name="Goble A."/>
            <person name="Hamlin N."/>
            <person name="Harris D.E."/>
            <person name="Hidalgo J."/>
            <person name="Hodgson G."/>
            <person name="Holroyd S."/>
            <person name="Hornsby T."/>
            <person name="Howarth S."/>
            <person name="Huckle E.J."/>
            <person name="Hunt S."/>
            <person name="Jagels K."/>
            <person name="James K.D."/>
            <person name="Jones L."/>
            <person name="Jones M."/>
            <person name="Leather S."/>
            <person name="McDonald S."/>
            <person name="McLean J."/>
            <person name="Mooney P."/>
            <person name="Moule S."/>
            <person name="Mungall K.L."/>
            <person name="Murphy L.D."/>
            <person name="Niblett D."/>
            <person name="Odell C."/>
            <person name="Oliver K."/>
            <person name="O'Neil S."/>
            <person name="Pearson D."/>
            <person name="Quail M.A."/>
            <person name="Rabbinowitsch E."/>
            <person name="Rutherford K.M."/>
            <person name="Rutter S."/>
            <person name="Saunders D."/>
            <person name="Seeger K."/>
            <person name="Sharp S."/>
            <person name="Skelton J."/>
            <person name="Simmonds M.N."/>
            <person name="Squares R."/>
            <person name="Squares S."/>
            <person name="Stevens K."/>
            <person name="Taylor K."/>
            <person name="Taylor R.G."/>
            <person name="Tivey A."/>
            <person name="Walsh S.V."/>
            <person name="Warren T."/>
            <person name="Whitehead S."/>
            <person name="Woodward J.R."/>
            <person name="Volckaert G."/>
            <person name="Aert R."/>
            <person name="Robben J."/>
            <person name="Grymonprez B."/>
            <person name="Weltjens I."/>
            <person name="Vanstreels E."/>
            <person name="Rieger M."/>
            <person name="Schaefer M."/>
            <person name="Mueller-Auer S."/>
            <person name="Gabel C."/>
            <person name="Fuchs M."/>
            <person name="Duesterhoeft A."/>
            <person name="Fritzc C."/>
            <person name="Holzer E."/>
            <person name="Moestl D."/>
            <person name="Hilbert H."/>
            <person name="Borzym K."/>
            <person name="Langer I."/>
            <person name="Beck A."/>
            <person name="Lehrach H."/>
            <person name="Reinhardt R."/>
            <person name="Pohl T.M."/>
            <person name="Eger P."/>
            <person name="Zimmermann W."/>
            <person name="Wedler H."/>
            <person name="Wambutt R."/>
            <person name="Purnelle B."/>
            <person name="Goffeau A."/>
            <person name="Cadieu E."/>
            <person name="Dreano S."/>
            <person name="Gloux S."/>
            <person name="Lelaure V."/>
            <person name="Mottier S."/>
            <person name="Galibert F."/>
            <person name="Aves S.J."/>
            <person name="Xiang Z."/>
            <person name="Hunt C."/>
            <person name="Moore K."/>
            <person name="Hurst S.M."/>
            <person name="Lucas M."/>
            <person name="Rochet M."/>
            <person name="Gaillardin C."/>
            <person name="Tallada V.A."/>
            <person name="Garzon A."/>
            <person name="Thode G."/>
            <person name="Daga R.R."/>
            <person name="Cruzado L."/>
            <person name="Jimenez J."/>
            <person name="Sanchez M."/>
            <person name="del Rey F."/>
            <person name="Benito J."/>
            <person name="Dominguez A."/>
            <person name="Revuelta J.L."/>
            <person name="Moreno S."/>
            <person name="Armstrong J."/>
            <person name="Forsburg S.L."/>
            <person name="Cerutti L."/>
            <person name="Lowe T."/>
            <person name="McCombie W.R."/>
            <person name="Paulsen I."/>
            <person name="Potashkin J."/>
            <person name="Shpakovski G.V."/>
            <person name="Ussery D."/>
            <person name="Barrell B.G."/>
            <person name="Nurse P."/>
        </authorList>
    </citation>
    <scope>NUCLEOTIDE SEQUENCE [LARGE SCALE GENOMIC DNA]</scope>
    <source>
        <strain>972 / ATCC 24843</strain>
    </source>
</reference>
<reference key="2">
    <citation type="journal article" date="2006" name="Nat. Biotechnol.">
        <title>ORFeome cloning and global analysis of protein localization in the fission yeast Schizosaccharomyces pombe.</title>
        <authorList>
            <person name="Matsuyama A."/>
            <person name="Arai R."/>
            <person name="Yashiroda Y."/>
            <person name="Shirai A."/>
            <person name="Kamata A."/>
            <person name="Sekido S."/>
            <person name="Kobayashi Y."/>
            <person name="Hashimoto A."/>
            <person name="Hamamoto M."/>
            <person name="Hiraoka Y."/>
            <person name="Horinouchi S."/>
            <person name="Yoshida M."/>
        </authorList>
    </citation>
    <scope>SUBCELLULAR LOCATION [LARGE SCALE ANALYSIS]</scope>
</reference>
<accession>Q10224</accession>
<evidence type="ECO:0000250" key="1"/>
<evidence type="ECO:0000269" key="2">
    <source>
    </source>
</evidence>
<proteinExistence type="inferred from homology"/>
<feature type="chain" id="PRO_0000116489" description="tRNA (carboxymethyluridine(34)-5-O)-methyltransferase">
    <location>
        <begin position="1"/>
        <end position="228"/>
    </location>
</feature>
<comment type="function">
    <text evidence="1">Required for the methylation of the wobble bases at position 34 in tRNA. Appears to have a role in stress-response (By similarity).</text>
</comment>
<comment type="catalytic activity">
    <reaction>
        <text>5-(carboxymethyl)uridine(34) in tRNA + S-adenosyl-L-methionine = 5-(2-methoxy-2-oxoethyl)uridine(34) in tRNA + S-adenosyl-L-homocysteine</text>
        <dbReference type="Rhea" id="RHEA:43208"/>
        <dbReference type="Rhea" id="RHEA-COMP:10407"/>
        <dbReference type="Rhea" id="RHEA-COMP:10408"/>
        <dbReference type="ChEBI" id="CHEBI:57856"/>
        <dbReference type="ChEBI" id="CHEBI:59789"/>
        <dbReference type="ChEBI" id="CHEBI:74851"/>
        <dbReference type="ChEBI" id="CHEBI:74882"/>
        <dbReference type="EC" id="2.1.1.229"/>
    </reaction>
</comment>
<comment type="subcellular location">
    <subcellularLocation>
        <location evidence="2">Cytoplasm</location>
    </subcellularLocation>
    <subcellularLocation>
        <location evidence="2">Nucleus</location>
    </subcellularLocation>
</comment>
<protein>
    <recommendedName>
        <fullName>tRNA (carboxymethyluridine(34)-5-O)-methyltransferase</fullName>
        <ecNumber>2.1.1.229</ecNumber>
    </recommendedName>
    <alternativeName>
        <fullName>tRNA (uracil-5-)-methyltransferase trm9</fullName>
    </alternativeName>
    <alternativeName>
        <fullName>tRNA [Um34] methyltransferase</fullName>
    </alternativeName>
    <alternativeName>
        <fullName>tRNA methylase 9</fullName>
    </alternativeName>
</protein>